<evidence type="ECO:0000255" key="1">
    <source>
        <dbReference type="HAMAP-Rule" id="MF_01241"/>
    </source>
</evidence>
<dbReference type="EC" id="3.5.99.6" evidence="1"/>
<dbReference type="EMBL" id="FM211187">
    <property type="protein sequence ID" value="CAR69179.1"/>
    <property type="molecule type" value="Genomic_DNA"/>
</dbReference>
<dbReference type="RefSeq" id="WP_000864617.1">
    <property type="nucleotide sequence ID" value="NC_011900.1"/>
</dbReference>
<dbReference type="SMR" id="B8ZKX4"/>
<dbReference type="KEGG" id="sne:SPN23F13800"/>
<dbReference type="HOGENOM" id="CLU_049611_1_0_9"/>
<dbReference type="UniPathway" id="UPA00629">
    <property type="reaction ID" value="UER00684"/>
</dbReference>
<dbReference type="GO" id="GO:0005737">
    <property type="term" value="C:cytoplasm"/>
    <property type="evidence" value="ECO:0007669"/>
    <property type="project" value="TreeGrafter"/>
</dbReference>
<dbReference type="GO" id="GO:0004342">
    <property type="term" value="F:glucosamine-6-phosphate deaminase activity"/>
    <property type="evidence" value="ECO:0007669"/>
    <property type="project" value="UniProtKB-UniRule"/>
</dbReference>
<dbReference type="GO" id="GO:0042802">
    <property type="term" value="F:identical protein binding"/>
    <property type="evidence" value="ECO:0007669"/>
    <property type="project" value="TreeGrafter"/>
</dbReference>
<dbReference type="GO" id="GO:0005975">
    <property type="term" value="P:carbohydrate metabolic process"/>
    <property type="evidence" value="ECO:0007669"/>
    <property type="project" value="InterPro"/>
</dbReference>
<dbReference type="GO" id="GO:0006043">
    <property type="term" value="P:glucosamine catabolic process"/>
    <property type="evidence" value="ECO:0007669"/>
    <property type="project" value="TreeGrafter"/>
</dbReference>
<dbReference type="GO" id="GO:0006046">
    <property type="term" value="P:N-acetylglucosamine catabolic process"/>
    <property type="evidence" value="ECO:0007669"/>
    <property type="project" value="TreeGrafter"/>
</dbReference>
<dbReference type="GO" id="GO:0019262">
    <property type="term" value="P:N-acetylneuraminate catabolic process"/>
    <property type="evidence" value="ECO:0007669"/>
    <property type="project" value="UniProtKB-UniRule"/>
</dbReference>
<dbReference type="CDD" id="cd01399">
    <property type="entry name" value="GlcN6P_deaminase"/>
    <property type="match status" value="1"/>
</dbReference>
<dbReference type="FunFam" id="3.40.50.1360:FF:000003">
    <property type="entry name" value="Glucosamine-6-phosphate deaminase"/>
    <property type="match status" value="1"/>
</dbReference>
<dbReference type="Gene3D" id="3.40.50.1360">
    <property type="match status" value="1"/>
</dbReference>
<dbReference type="HAMAP" id="MF_01241">
    <property type="entry name" value="GlcN6P_deamin"/>
    <property type="match status" value="1"/>
</dbReference>
<dbReference type="InterPro" id="IPR006148">
    <property type="entry name" value="Glc/Gal-6P_isomerase"/>
</dbReference>
<dbReference type="InterPro" id="IPR004547">
    <property type="entry name" value="Glucosamine6P_isomerase"/>
</dbReference>
<dbReference type="InterPro" id="IPR018321">
    <property type="entry name" value="Glucosamine6P_isomerase_CS"/>
</dbReference>
<dbReference type="InterPro" id="IPR037171">
    <property type="entry name" value="NagB/RpiA_transferase-like"/>
</dbReference>
<dbReference type="PANTHER" id="PTHR11280">
    <property type="entry name" value="GLUCOSAMINE-6-PHOSPHATE ISOMERASE"/>
    <property type="match status" value="1"/>
</dbReference>
<dbReference type="PANTHER" id="PTHR11280:SF5">
    <property type="entry name" value="GLUCOSAMINE-6-PHOSPHATE ISOMERASE"/>
    <property type="match status" value="1"/>
</dbReference>
<dbReference type="Pfam" id="PF01182">
    <property type="entry name" value="Glucosamine_iso"/>
    <property type="match status" value="1"/>
</dbReference>
<dbReference type="SUPFAM" id="SSF100950">
    <property type="entry name" value="NagB/RpiA/CoA transferase-like"/>
    <property type="match status" value="1"/>
</dbReference>
<dbReference type="PROSITE" id="PS01161">
    <property type="entry name" value="GLC_GALNAC_ISOMERASE"/>
    <property type="match status" value="1"/>
</dbReference>
<feature type="chain" id="PRO_1000165027" description="Glucosamine-6-phosphate deaminase">
    <location>
        <begin position="1"/>
        <end position="235"/>
    </location>
</feature>
<feature type="active site" description="Proton acceptor; for enolization step" evidence="1">
    <location>
        <position position="62"/>
    </location>
</feature>
<feature type="active site" description="For ring-opening step" evidence="1">
    <location>
        <position position="128"/>
    </location>
</feature>
<feature type="active site" description="Proton acceptor; for ring-opening step" evidence="1">
    <location>
        <position position="130"/>
    </location>
</feature>
<feature type="active site" description="For ring-opening step" evidence="1">
    <location>
        <position position="135"/>
    </location>
</feature>
<sequence length="235" mass="25730">MKVIKVENQVQGGKVAFEILKEKLANGAQTLGLATGSSPLEFYKEIVESDLDFSNLTSVNLDEYVGLDGDNPQSYRYFMQENLFNQKPFKESFLPRGVKDNAEAEVERYNQILADHPVDLQILGIGRNGHIGFNEPGTPFDSQTHLVELDQSTIEANARFFAKIEDVPTQAISMGIKNILDAKSIILFAYGESKAEAIAGTVSGPVTENLPASSLQNHPDVTIIADAEALSLLEK</sequence>
<organism>
    <name type="scientific">Streptococcus pneumoniae (strain ATCC 700669 / Spain 23F-1)</name>
    <dbReference type="NCBI Taxonomy" id="561276"/>
    <lineage>
        <taxon>Bacteria</taxon>
        <taxon>Bacillati</taxon>
        <taxon>Bacillota</taxon>
        <taxon>Bacilli</taxon>
        <taxon>Lactobacillales</taxon>
        <taxon>Streptococcaceae</taxon>
        <taxon>Streptococcus</taxon>
    </lineage>
</organism>
<proteinExistence type="inferred from homology"/>
<keyword id="KW-0119">Carbohydrate metabolism</keyword>
<keyword id="KW-0378">Hydrolase</keyword>
<gene>
    <name evidence="1" type="primary">nagB</name>
    <name type="ordered locus">SPN23F13800</name>
</gene>
<accession>B8ZKX4</accession>
<comment type="function">
    <text evidence="1">Catalyzes the reversible isomerization-deamination of glucosamine 6-phosphate (GlcN6P) to form fructose 6-phosphate (Fru6P) and ammonium ion.</text>
</comment>
<comment type="catalytic activity">
    <reaction evidence="1">
        <text>alpha-D-glucosamine 6-phosphate + H2O = beta-D-fructose 6-phosphate + NH4(+)</text>
        <dbReference type="Rhea" id="RHEA:12172"/>
        <dbReference type="ChEBI" id="CHEBI:15377"/>
        <dbReference type="ChEBI" id="CHEBI:28938"/>
        <dbReference type="ChEBI" id="CHEBI:57634"/>
        <dbReference type="ChEBI" id="CHEBI:75989"/>
        <dbReference type="EC" id="3.5.99.6"/>
    </reaction>
</comment>
<comment type="pathway">
    <text evidence="1">Amino-sugar metabolism; N-acetylneuraminate degradation; D-fructose 6-phosphate from N-acetylneuraminate: step 5/5.</text>
</comment>
<comment type="similarity">
    <text evidence="1">Belongs to the glucosamine/galactosamine-6-phosphate isomerase family. NagB subfamily.</text>
</comment>
<name>NAGB_STRPJ</name>
<protein>
    <recommendedName>
        <fullName evidence="1">Glucosamine-6-phosphate deaminase</fullName>
        <ecNumber evidence="1">3.5.99.6</ecNumber>
    </recommendedName>
    <alternativeName>
        <fullName evidence="1">GlcN6P deaminase</fullName>
        <shortName evidence="1">GNPDA</shortName>
    </alternativeName>
    <alternativeName>
        <fullName evidence="1">Glucosamine-6-phosphate isomerase</fullName>
    </alternativeName>
</protein>
<reference key="1">
    <citation type="journal article" date="2009" name="J. Bacteriol.">
        <title>Role of conjugative elements in the evolution of the multidrug-resistant pandemic clone Streptococcus pneumoniae Spain23F ST81.</title>
        <authorList>
            <person name="Croucher N.J."/>
            <person name="Walker D."/>
            <person name="Romero P."/>
            <person name="Lennard N."/>
            <person name="Paterson G.K."/>
            <person name="Bason N.C."/>
            <person name="Mitchell A.M."/>
            <person name="Quail M.A."/>
            <person name="Andrew P.W."/>
            <person name="Parkhill J."/>
            <person name="Bentley S.D."/>
            <person name="Mitchell T.J."/>
        </authorList>
    </citation>
    <scope>NUCLEOTIDE SEQUENCE [LARGE SCALE GENOMIC DNA]</scope>
    <source>
        <strain>ATCC 700669 / Spain 23F-1</strain>
    </source>
</reference>